<proteinExistence type="inferred from homology"/>
<protein>
    <recommendedName>
        <fullName evidence="4">Trans-enoyl reductase resD</fullName>
        <ecNumber evidence="6">1.-.-.-</ecNumber>
    </recommendedName>
    <alternativeName>
        <fullName evidence="4">Restricticin biosynthesis cluster protein D</fullName>
    </alternativeName>
</protein>
<evidence type="ECO:0000250" key="1">
    <source>
        <dbReference type="UniProtKB" id="A0A0L1JEX1"/>
    </source>
</evidence>
<evidence type="ECO:0000250" key="2">
    <source>
        <dbReference type="UniProtKB" id="Q9Y7D0"/>
    </source>
</evidence>
<evidence type="ECO:0000269" key="3">
    <source>
    </source>
</evidence>
<evidence type="ECO:0000303" key="4">
    <source>
    </source>
</evidence>
<evidence type="ECO:0000305" key="5"/>
<evidence type="ECO:0000305" key="6">
    <source>
    </source>
</evidence>
<accession>P0DXV9</accession>
<comment type="function">
    <text evidence="1 3">Trans-enoyl reductase; part of the gene cluster that mediates the biosynthesis of the tetrahydropyranyl antifungal agent restricticin that acts as an inhibitor of CYP51 and blocks the ergosterol biosynthesis (PubMed:39105744). The highly reducing polyketide synthase resH, the short chain dehydrogenase resG, the cyclase resF, the FAD-dependent monooxygenase resA and the enoylreductase resD are required to generate the first stable intermediate desmethylrestrictinol. ResH with resD biosynthesize the first polyketide chain intermediate that is reduced by resG, followed by epoxidation by resA before 6-endo cyclization via epoxide opening by resF leads to desmethylrestrictinol. The methyltransferase resE then catalyzes the C4 O-methylation of desmethylrestrictinol to produce restrictinol, and the nonribosomal peptide synthetase resC catalyzes the C3 esterification of restrictinol with glycine that leads to restricticin (By similarity).</text>
</comment>
<comment type="pathway">
    <text evidence="3">Antifungal biosynthesis.</text>
</comment>
<comment type="similarity">
    <text evidence="5">Belongs to the zinc-containing alcohol dehydrogenase family.</text>
</comment>
<name>RESD_ASPSL</name>
<gene>
    <name evidence="4" type="primary">resD</name>
</gene>
<keyword id="KW-0521">NADP</keyword>
<keyword id="KW-0547">Nucleotide-binding</keyword>
<keyword id="KW-0560">Oxidoreductase</keyword>
<feature type="chain" id="PRO_0000461554" description="Trans-enoyl reductase resD">
    <location>
        <begin position="1"/>
        <end position="357"/>
    </location>
</feature>
<feature type="binding site" evidence="2">
    <location>
        <position position="211"/>
    </location>
    <ligand>
        <name>NADP(+)</name>
        <dbReference type="ChEBI" id="CHEBI:58349"/>
    </ligand>
</feature>
<sequence length="357" mass="37827">MQAIISTAPGQAALVHDRPLPTIRDGYLLVKTKAVALNPTDWKHIEVTQKPGILFGCDYAGIVEQVGPGVQSGFQPGDRVAGFVHGGNSKEPQDGAFAEYIVAKADLQIHIPEHMSFEEAATLGVGITAVGQGLYQTLSLPFPSPSSIHEDGAEKPANPATQPILIYGASTASGVLGIQFAKLSGFAPLAVCSPDHFDLAERLGAVAVFDYADGEDAVEEIQDYVRGMGQPLLKAWDTISIPSSARFCGDALSSGNGPQYASLLSMTCPRPDVTSTTTMAYTVFGEDWGMGTAHFPASGVDAELGRRWWALVQQLLNEGRIQTHRIIAGEGGLDGVLGGLQQLRDSQVRGGKLVFRV</sequence>
<reference key="1">
    <citation type="journal article" date="2024" name="J. Agric. Food Chem.">
        <title>Discovery of a hybrid molecule with phytotoxic activity by genome mining, heterologous expression, and OSMAC strategy.</title>
        <authorList>
            <person name="Lu Y."/>
            <person name="Li Y."/>
            <person name="Dou M."/>
            <person name="Liu D."/>
            <person name="Lin W."/>
            <person name="Fan A."/>
        </authorList>
    </citation>
    <scope>NUCLEOTIDE SEQUENCE [GENOMIC DNA]</scope>
    <scope>FUNCTION</scope>
    <scope>PATHWAY</scope>
</reference>
<dbReference type="EC" id="1.-.-.-" evidence="6"/>
<dbReference type="GO" id="GO:0000166">
    <property type="term" value="F:nucleotide binding"/>
    <property type="evidence" value="ECO:0007669"/>
    <property type="project" value="UniProtKB-KW"/>
</dbReference>
<dbReference type="GO" id="GO:0016651">
    <property type="term" value="F:oxidoreductase activity, acting on NAD(P)H"/>
    <property type="evidence" value="ECO:0007669"/>
    <property type="project" value="InterPro"/>
</dbReference>
<dbReference type="CDD" id="cd08249">
    <property type="entry name" value="enoyl_reductase_like"/>
    <property type="match status" value="1"/>
</dbReference>
<dbReference type="Gene3D" id="3.90.180.10">
    <property type="entry name" value="Medium-chain alcohol dehydrogenases, catalytic domain"/>
    <property type="match status" value="1"/>
</dbReference>
<dbReference type="Gene3D" id="3.40.50.720">
    <property type="entry name" value="NAD(P)-binding Rossmann-like Domain"/>
    <property type="match status" value="1"/>
</dbReference>
<dbReference type="InterPro" id="IPR013154">
    <property type="entry name" value="ADH-like_N"/>
</dbReference>
<dbReference type="InterPro" id="IPR011032">
    <property type="entry name" value="GroES-like_sf"/>
</dbReference>
<dbReference type="InterPro" id="IPR036291">
    <property type="entry name" value="NAD(P)-bd_dom_sf"/>
</dbReference>
<dbReference type="InterPro" id="IPR020843">
    <property type="entry name" value="PKS_ER"/>
</dbReference>
<dbReference type="InterPro" id="IPR047122">
    <property type="entry name" value="Trans-enoyl_RdTase-like"/>
</dbReference>
<dbReference type="PANTHER" id="PTHR45348">
    <property type="entry name" value="HYPOTHETICAL OXIDOREDUCTASE (EUROFUNG)"/>
    <property type="match status" value="1"/>
</dbReference>
<dbReference type="PANTHER" id="PTHR45348:SF2">
    <property type="entry name" value="ZINC-TYPE ALCOHOL DEHYDROGENASE-LIKE PROTEIN C2E1P3.01"/>
    <property type="match status" value="1"/>
</dbReference>
<dbReference type="Pfam" id="PF08240">
    <property type="entry name" value="ADH_N"/>
    <property type="match status" value="1"/>
</dbReference>
<dbReference type="SMART" id="SM00829">
    <property type="entry name" value="PKS_ER"/>
    <property type="match status" value="1"/>
</dbReference>
<dbReference type="SUPFAM" id="SSF50129">
    <property type="entry name" value="GroES-like"/>
    <property type="match status" value="1"/>
</dbReference>
<dbReference type="SUPFAM" id="SSF51735">
    <property type="entry name" value="NAD(P)-binding Rossmann-fold domains"/>
    <property type="match status" value="1"/>
</dbReference>
<organism>
    <name type="scientific">Aspergillus sclerotiorum</name>
    <dbReference type="NCBI Taxonomy" id="138282"/>
    <lineage>
        <taxon>Eukaryota</taxon>
        <taxon>Fungi</taxon>
        <taxon>Dikarya</taxon>
        <taxon>Ascomycota</taxon>
        <taxon>Pezizomycotina</taxon>
        <taxon>Eurotiomycetes</taxon>
        <taxon>Eurotiomycetidae</taxon>
        <taxon>Eurotiales</taxon>
        <taxon>Aspergillaceae</taxon>
        <taxon>Aspergillus</taxon>
        <taxon>Aspergillus subgen. Circumdati</taxon>
    </lineage>
</organism>